<proteinExistence type="inferred from homology"/>
<protein>
    <recommendedName>
        <fullName>Protein PA-X</fullName>
    </recommendedName>
</protein>
<dbReference type="EMBL" id="CY014676">
    <property type="status" value="NOT_ANNOTATED_CDS"/>
    <property type="molecule type" value="Genomic_RNA"/>
</dbReference>
<dbReference type="SMR" id="P0CK82"/>
<dbReference type="Proteomes" id="UP000008217">
    <property type="component" value="Genome"/>
</dbReference>
<dbReference type="GO" id="GO:0003723">
    <property type="term" value="F:RNA binding"/>
    <property type="evidence" value="ECO:0007669"/>
    <property type="project" value="InterPro"/>
</dbReference>
<dbReference type="GO" id="GO:0039694">
    <property type="term" value="P:viral RNA genome replication"/>
    <property type="evidence" value="ECO:0007669"/>
    <property type="project" value="InterPro"/>
</dbReference>
<dbReference type="GO" id="GO:0075523">
    <property type="term" value="P:viral translational frameshifting"/>
    <property type="evidence" value="ECO:0007669"/>
    <property type="project" value="UniProtKB-KW"/>
</dbReference>
<dbReference type="FunFam" id="3.40.91.90:FF:000001">
    <property type="entry name" value="Polymerase acidic protein"/>
    <property type="match status" value="1"/>
</dbReference>
<dbReference type="Gene3D" id="3.40.91.90">
    <property type="entry name" value="Influenza RNA-dependent RNA polymerase subunit PA, endonuclease domain"/>
    <property type="match status" value="1"/>
</dbReference>
<dbReference type="InterPro" id="IPR001009">
    <property type="entry name" value="PA/PA-X"/>
</dbReference>
<dbReference type="InterPro" id="IPR038372">
    <property type="entry name" value="PA/PA-X_sf"/>
</dbReference>
<dbReference type="Pfam" id="PF00603">
    <property type="entry name" value="Flu_PA"/>
    <property type="match status" value="1"/>
</dbReference>
<comment type="function">
    <text evidence="1 4">Plays a major role in the shutoff of the host protein expression by cleaving mRNAs probably via an endonuclease activity. This host shutoff allows the virus to escape from the host antiviral response (By similarity). Hijacks host RNA splicing machinery to selectively target host RNAs containing introns for destruction. This may explain the preferential degradation of RNAs that have undergone co- or post-transcriptional processing (By similarity).</text>
</comment>
<comment type="subcellular location">
    <subcellularLocation>
        <location evidence="4">Host cytoplasm</location>
    </subcellularLocation>
    <subcellularLocation>
        <location evidence="4">Host nucleus</location>
    </subcellularLocation>
</comment>
<comment type="alternative products">
    <event type="ribosomal frameshifting"/>
    <isoform>
        <id>P0CK82-1</id>
        <name>PA-X</name>
        <sequence type="displayed"/>
    </isoform>
    <isoform>
        <id>Q0A441-1</id>
        <name>PA</name>
        <sequence type="external"/>
    </isoform>
</comment>
<comment type="domain">
    <text evidence="1 4">The probable endonuclease active site in the N-terminus and the basic amino acid cluster in the C-terminus are important for the shutoff activity. The C-terminus acts as a nuclear localization signal (By similarity). The C-terminus is recruited to host protein complexes involved in nuclear Pol II RNA processing (By similarity).</text>
</comment>
<comment type="similarity">
    <text evidence="6">Belongs to the influenza viruses PA-X family.</text>
</comment>
<gene>
    <name type="primary">PA</name>
</gene>
<accession>P0CK82</accession>
<sequence length="252" mass="29376">MEDFVRQCFNPMIVELAEKAMKEYGEDPKIETNKFAAICTHLEVCFMYSDFHFIDERGESIIVESGDPNALLKHRFEIIEGRDRTMAWTVVNSICNTTRVEKPKFLPDLYDYKENRFIEIGVTRREVHIYYLEKANKIKSEKTHIHIFSFTGEEMATKADYTLDEESRARIKTRLFTIRQEMASRGLWDSFVSPREAKRQLKKDLKSQEPCAGSPTKVSHRTSPALKTLEPMWMDSSRTAALRASFLKCPKK</sequence>
<feature type="chain" id="PRO_0000419365" description="Protein PA-X">
    <location>
        <begin position="1"/>
        <end position="252"/>
    </location>
</feature>
<feature type="region of interest" description="Disordered" evidence="5">
    <location>
        <begin position="202"/>
        <end position="223"/>
    </location>
</feature>
<feature type="active site" evidence="2">
    <location>
        <position position="80"/>
    </location>
</feature>
<feature type="active site" evidence="2">
    <location>
        <position position="108"/>
    </location>
</feature>
<feature type="site" description="Important for efficient shutoff activity and nuclear localization" evidence="4">
    <location>
        <position position="195"/>
    </location>
</feature>
<feature type="site" description="Important for efficient shutoff activity and nuclear localization" evidence="4">
    <location>
        <position position="198"/>
    </location>
</feature>
<feature type="site" description="Important for efficient shutoff activity and nuclear localization" evidence="4">
    <location>
        <position position="199"/>
    </location>
</feature>
<feature type="site" description="Important for efficient shutoff activity" evidence="3">
    <location>
        <position position="202"/>
    </location>
</feature>
<feature type="site" description="Important for efficient shutoff activity" evidence="3">
    <location>
        <position position="203"/>
    </location>
</feature>
<feature type="site" description="Important for efficient shutoff activity" evidence="3">
    <location>
        <position position="206"/>
    </location>
</feature>
<evidence type="ECO:0000250" key="1">
    <source>
        <dbReference type="UniProtKB" id="P0CK64"/>
    </source>
</evidence>
<evidence type="ECO:0000250" key="2">
    <source>
        <dbReference type="UniProtKB" id="P0CK68"/>
    </source>
</evidence>
<evidence type="ECO:0000250" key="3">
    <source>
        <dbReference type="UniProtKB" id="P0DJW8"/>
    </source>
</evidence>
<evidence type="ECO:0000250" key="4">
    <source>
        <dbReference type="UniProtKB" id="P0DXO5"/>
    </source>
</evidence>
<evidence type="ECO:0000256" key="5">
    <source>
        <dbReference type="SAM" id="MobiDB-lite"/>
    </source>
</evidence>
<evidence type="ECO:0000305" key="6"/>
<organismHost>
    <name type="scientific">Aves</name>
    <dbReference type="NCBI Taxonomy" id="8782"/>
</organismHost>
<reference key="1">
    <citation type="journal article" date="2006" name="Science">
        <title>Large-scale sequence analysis of avian influenza isolates.</title>
        <authorList>
            <person name="Obenauer J.C."/>
            <person name="Denson J."/>
            <person name="Mehta P.K."/>
            <person name="Su X."/>
            <person name="Mukatira S."/>
            <person name="Finkelstein D.B."/>
            <person name="Xu X."/>
            <person name="Wang J."/>
            <person name="Ma J."/>
            <person name="Fan Y."/>
            <person name="Rakestraw K.M."/>
            <person name="Webster R.G."/>
            <person name="Hoffmann E."/>
            <person name="Krauss S."/>
            <person name="Zheng J."/>
            <person name="Zhang Z."/>
            <person name="Naeve C.W."/>
        </authorList>
    </citation>
    <scope>NUCLEOTIDE SEQUENCE [GENOMIC RNA]</scope>
</reference>
<name>PAX_I49A1</name>
<keyword id="KW-1132">Decay of host mRNAs by virus</keyword>
<keyword id="KW-1262">Eukaryotic host gene expression shutoff by virus</keyword>
<keyword id="KW-1035">Host cytoplasm</keyword>
<keyword id="KW-1190">Host gene expression shutoff by virus</keyword>
<keyword id="KW-1192">Host mRNA suppression by virus</keyword>
<keyword id="KW-1048">Host nucleus</keyword>
<keyword id="KW-0945">Host-virus interaction</keyword>
<keyword id="KW-0688">Ribosomal frameshifting</keyword>
<organism>
    <name type="scientific">Influenza A virus (strain A/Duck/Germany/1949 H10N7)</name>
    <dbReference type="NCBI Taxonomy" id="382838"/>
    <lineage>
        <taxon>Viruses</taxon>
        <taxon>Riboviria</taxon>
        <taxon>Orthornavirae</taxon>
        <taxon>Negarnaviricota</taxon>
        <taxon>Polyploviricotina</taxon>
        <taxon>Insthoviricetes</taxon>
        <taxon>Articulavirales</taxon>
        <taxon>Orthomyxoviridae</taxon>
        <taxon>Alphainfluenzavirus</taxon>
        <taxon>Alphainfluenzavirus influenzae</taxon>
        <taxon>Influenza A virus</taxon>
    </lineage>
</organism>